<protein>
    <recommendedName>
        <fullName>Shugoshin</fullName>
    </recommendedName>
</protein>
<sequence>MPKRKIAPNKESSRRTVSHDDLTPQIQEFQNLMDLESQKVENIRQSYSRQNSLLAKDNSILKIKVNSLEKKISQLVQENVTLRSKTSISEAIYRERLSNQLQVIENGIIQRFDEIFYMFENVRKNENLPSSSLRTMLKRTSSRSRSCSLSSPTYSKSYTRLSNHENNLSHESSFNKDDGPDLEPKAKKRKSSRRQSMFVSTSLEPEDETGENEPMMENSSVEVPAESHESAQVEETIDALNPEEENSDSVSNFTNSIIEYSIPEENPTEPEHSSSKLEIFNDSTNMLSTVPSNPLPLPLPGPSATLPTTTSDASTVYPSSSSSTNSHPKTKIKHSMKPPRIELKKKVIDEVMPVSNMSSNSEISFTRTRRTRGKAVDYTLPSLRAKMRRPSEKLVDATTVIDIHDLQVSKRNRETSHKRKSLSQDSIPDEPQLREVVVSKDYGTPKGKKTEDEIHEDTAHLMTTSNNNSNNKNEKKLTSNNSPKKSSPLLDITNKSENKKKSTRTKKLFKNAIVNNLSDENSTTRPSKSSKGTSNNNNNYNNFDNNNSNINNVNNKSVSFRLNEDDLAVFDLFGNGKAVKHQPKTYRTKK</sequence>
<organism>
    <name type="scientific">Saccharomyces cerevisiae (strain ATCC 204508 / S288c)</name>
    <name type="common">Baker's yeast</name>
    <dbReference type="NCBI Taxonomy" id="559292"/>
    <lineage>
        <taxon>Eukaryota</taxon>
        <taxon>Fungi</taxon>
        <taxon>Dikarya</taxon>
        <taxon>Ascomycota</taxon>
        <taxon>Saccharomycotina</taxon>
        <taxon>Saccharomycetes</taxon>
        <taxon>Saccharomycetales</taxon>
        <taxon>Saccharomycetaceae</taxon>
        <taxon>Saccharomyces</taxon>
    </lineage>
</organism>
<feature type="chain" id="PRO_0000055450" description="Shugoshin">
    <location>
        <begin position="1"/>
        <end position="590"/>
    </location>
</feature>
<feature type="region of interest" description="Disordered" evidence="2">
    <location>
        <begin position="1"/>
        <end position="20"/>
    </location>
</feature>
<feature type="region of interest" description="Disordered" evidence="2">
    <location>
        <begin position="133"/>
        <end position="235"/>
    </location>
</feature>
<feature type="region of interest" description="Disordered" evidence="2">
    <location>
        <begin position="291"/>
        <end position="337"/>
    </location>
</feature>
<feature type="region of interest" description="Disordered" evidence="2">
    <location>
        <begin position="411"/>
        <end position="550"/>
    </location>
</feature>
<feature type="coiled-coil region" evidence="1">
    <location>
        <begin position="25"/>
        <end position="86"/>
    </location>
</feature>
<feature type="compositionally biased region" description="Basic and acidic residues" evidence="2">
    <location>
        <begin position="11"/>
        <end position="20"/>
    </location>
</feature>
<feature type="compositionally biased region" description="Basic and acidic residues" evidence="2">
    <location>
        <begin position="173"/>
        <end position="185"/>
    </location>
</feature>
<feature type="compositionally biased region" description="Low complexity" evidence="2">
    <location>
        <begin position="302"/>
        <end position="326"/>
    </location>
</feature>
<feature type="compositionally biased region" description="Basic residues" evidence="2">
    <location>
        <begin position="328"/>
        <end position="337"/>
    </location>
</feature>
<feature type="compositionally biased region" description="Basic and acidic residues" evidence="2">
    <location>
        <begin position="448"/>
        <end position="459"/>
    </location>
</feature>
<feature type="compositionally biased region" description="Polar residues" evidence="2">
    <location>
        <begin position="513"/>
        <end position="526"/>
    </location>
</feature>
<feature type="compositionally biased region" description="Low complexity" evidence="2">
    <location>
        <begin position="527"/>
        <end position="550"/>
    </location>
</feature>
<feature type="mutagenesis site" description="In sgo1-100; induces a lack of response when chromosomes that are not under tension." evidence="6">
    <original>T</original>
    <variation>I</variation>
    <location>
        <position position="379"/>
    </location>
</feature>
<feature type="mutagenesis site" description="In sgo1-700; induces a lack of response when chromosomes that are not under tension." evidence="6">
    <original>P</original>
    <variation>H</variation>
    <location>
        <position position="390"/>
    </location>
</feature>
<proteinExistence type="evidence at protein level"/>
<gene>
    <name type="primary">SGO1</name>
    <name type="ordered locus">YOR073W</name>
    <name type="ORF">YOR29-24</name>
</gene>
<evidence type="ECO:0000255" key="1"/>
<evidence type="ECO:0000256" key="2">
    <source>
        <dbReference type="SAM" id="MobiDB-lite"/>
    </source>
</evidence>
<evidence type="ECO:0000269" key="3">
    <source>
    </source>
</evidence>
<evidence type="ECO:0000269" key="4">
    <source>
    </source>
</evidence>
<evidence type="ECO:0000269" key="5">
    <source>
    </source>
</evidence>
<evidence type="ECO:0000269" key="6">
    <source>
    </source>
</evidence>
<evidence type="ECO:0000305" key="7"/>
<comment type="function">
    <text evidence="4 5 6">Plays a central role in chromosome cohesion during mitosis and meiosis divisions by preventing premature dissociation of cohesin complex from centromeres after prophase, when most of cohesin complex dissociates from chromosomes arms. Probably act by protecting REC8 and RAD21 from separase degradation during anaphase. Also acts as a spindle checkpoint component required for sensing tension between sister chromatids during mitosis, its degradation when they separate preventing cell cycle arrest and chromosome loss in anaphase, a time when sister chromatids are no longer under tension.</text>
</comment>
<comment type="subcellular location">
    <subcellularLocation>
        <location evidence="4 5">Chromosome</location>
        <location evidence="4 5">Centromere</location>
    </subcellularLocation>
    <subcellularLocation>
        <location evidence="5">Chromosome</location>
        <location evidence="5">Centromere</location>
        <location evidence="5">Kinetochore</location>
    </subcellularLocation>
    <subcellularLocation>
        <location evidence="3 5">Cytoplasm</location>
        <location evidence="3 5">Cytoskeleton</location>
        <location evidence="3 5">Spindle pole</location>
    </subcellularLocation>
    <text evidence="5">Localizes to the centromere during S and M phases, dissociates at the onset of anaphase. Colocalizes with kinetochores. Associates with the spindle pole.</text>
</comment>
<comment type="developmental stage">
    <text evidence="4">Appears in S phase cells and remains present during mitosis until metaphase. Degraded at the onset of anaphase. During meiosis it is present until anaphase II and is then degraded. Not present in G1 cells.</text>
</comment>
<comment type="PTM">
    <text evidence="7">Ubiquitinated by the anaphase promoting complex (APC) at the onset of anaphase, conducting to its degradation.</text>
</comment>
<comment type="similarity">
    <text evidence="7">Belongs to the shugoshin family.</text>
</comment>
<keyword id="KW-0131">Cell cycle</keyword>
<keyword id="KW-0132">Cell division</keyword>
<keyword id="KW-0137">Centromere</keyword>
<keyword id="KW-0158">Chromosome</keyword>
<keyword id="KW-0159">Chromosome partition</keyword>
<keyword id="KW-0175">Coiled coil</keyword>
<keyword id="KW-0963">Cytoplasm</keyword>
<keyword id="KW-0206">Cytoskeleton</keyword>
<keyword id="KW-0995">Kinetochore</keyword>
<keyword id="KW-0469">Meiosis</keyword>
<keyword id="KW-0498">Mitosis</keyword>
<keyword id="KW-1185">Reference proteome</keyword>
<keyword id="KW-0832">Ubl conjugation</keyword>
<dbReference type="EMBL" id="Z74981">
    <property type="protein sequence ID" value="CAA99266.1"/>
    <property type="molecule type" value="Genomic_DNA"/>
</dbReference>
<dbReference type="EMBL" id="Z70678">
    <property type="protein sequence ID" value="CAA94558.1"/>
    <property type="molecule type" value="Genomic_DNA"/>
</dbReference>
<dbReference type="EMBL" id="BK006948">
    <property type="protein sequence ID" value="DAA10852.1"/>
    <property type="molecule type" value="Genomic_DNA"/>
</dbReference>
<dbReference type="PIR" id="S66956">
    <property type="entry name" value="S66956"/>
</dbReference>
<dbReference type="RefSeq" id="NP_014716.1">
    <property type="nucleotide sequence ID" value="NM_001183492.1"/>
</dbReference>
<dbReference type="SMR" id="Q08490"/>
<dbReference type="BioGRID" id="34472">
    <property type="interactions" value="730"/>
</dbReference>
<dbReference type="DIP" id="DIP-4161N"/>
<dbReference type="FunCoup" id="Q08490">
    <property type="interactions" value="250"/>
</dbReference>
<dbReference type="IntAct" id="Q08490">
    <property type="interactions" value="1"/>
</dbReference>
<dbReference type="STRING" id="4932.YOR073W"/>
<dbReference type="iPTMnet" id="Q08490"/>
<dbReference type="PaxDb" id="4932-YOR073W"/>
<dbReference type="PeptideAtlas" id="Q08490"/>
<dbReference type="EnsemblFungi" id="YOR073W_mRNA">
    <property type="protein sequence ID" value="YOR073W"/>
    <property type="gene ID" value="YOR073W"/>
</dbReference>
<dbReference type="GeneID" id="854240"/>
<dbReference type="KEGG" id="sce:YOR073W"/>
<dbReference type="AGR" id="SGD:S000005599"/>
<dbReference type="SGD" id="S000005599">
    <property type="gene designation" value="SGO1"/>
</dbReference>
<dbReference type="VEuPathDB" id="FungiDB:YOR073W"/>
<dbReference type="eggNOG" id="ENOG502QSMK">
    <property type="taxonomic scope" value="Eukaryota"/>
</dbReference>
<dbReference type="HOGENOM" id="CLU_019322_0_0_1"/>
<dbReference type="InParanoid" id="Q08490"/>
<dbReference type="OMA" id="HQPKTYR"/>
<dbReference type="OrthoDB" id="5394106at2759"/>
<dbReference type="BioCyc" id="YEAST:G3O-33611-MONOMER"/>
<dbReference type="BioGRID-ORCS" id="854240">
    <property type="hits" value="1 hit in 10 CRISPR screens"/>
</dbReference>
<dbReference type="CD-CODE" id="876000F7">
    <property type="entry name" value="Centrosome"/>
</dbReference>
<dbReference type="PRO" id="PR:Q08490"/>
<dbReference type="Proteomes" id="UP000002311">
    <property type="component" value="Chromosome XV"/>
</dbReference>
<dbReference type="RNAct" id="Q08490">
    <property type="molecule type" value="protein"/>
</dbReference>
<dbReference type="GO" id="GO:0000775">
    <property type="term" value="C:chromosome, centromeric region"/>
    <property type="evidence" value="ECO:0000314"/>
    <property type="project" value="SGD"/>
</dbReference>
<dbReference type="GO" id="GO:0000779">
    <property type="term" value="C:condensed chromosome, centromeric region"/>
    <property type="evidence" value="ECO:0000314"/>
    <property type="project" value="SGD"/>
</dbReference>
<dbReference type="GO" id="GO:0005737">
    <property type="term" value="C:cytoplasm"/>
    <property type="evidence" value="ECO:0007669"/>
    <property type="project" value="UniProtKB-KW"/>
</dbReference>
<dbReference type="GO" id="GO:0000776">
    <property type="term" value="C:kinetochore"/>
    <property type="evidence" value="ECO:0000314"/>
    <property type="project" value="SGD"/>
</dbReference>
<dbReference type="GO" id="GO:0005634">
    <property type="term" value="C:nucleus"/>
    <property type="evidence" value="ECO:0007005"/>
    <property type="project" value="SGD"/>
</dbReference>
<dbReference type="GO" id="GO:0000922">
    <property type="term" value="C:spindle pole"/>
    <property type="evidence" value="ECO:0007669"/>
    <property type="project" value="UniProtKB-SubCell"/>
</dbReference>
<dbReference type="GO" id="GO:0051301">
    <property type="term" value="P:cell division"/>
    <property type="evidence" value="ECO:0007669"/>
    <property type="project" value="UniProtKB-KW"/>
</dbReference>
<dbReference type="GO" id="GO:0034508">
    <property type="term" value="P:centromere complex assembly"/>
    <property type="evidence" value="ECO:0000315"/>
    <property type="project" value="SGD"/>
</dbReference>
<dbReference type="GO" id="GO:0045184">
    <property type="term" value="P:establishment of protein localization"/>
    <property type="evidence" value="ECO:0000314"/>
    <property type="project" value="SGD"/>
</dbReference>
<dbReference type="GO" id="GO:0070199">
    <property type="term" value="P:establishment of protein localization to chromosome"/>
    <property type="evidence" value="ECO:0000315"/>
    <property type="project" value="SGD"/>
</dbReference>
<dbReference type="GO" id="GO:0051383">
    <property type="term" value="P:kinetochore organization"/>
    <property type="evidence" value="ECO:0000314"/>
    <property type="project" value="SGD"/>
</dbReference>
<dbReference type="GO" id="GO:0034090">
    <property type="term" value="P:maintenance of meiotic sister chromatid cohesion"/>
    <property type="evidence" value="ECO:0000315"/>
    <property type="project" value="SGD"/>
</dbReference>
<dbReference type="GO" id="GO:0045144">
    <property type="term" value="P:meiotic sister chromatid segregation"/>
    <property type="evidence" value="ECO:0000315"/>
    <property type="project" value="SGD"/>
</dbReference>
<dbReference type="GO" id="GO:0051757">
    <property type="term" value="P:meiotic sister chromatid separation"/>
    <property type="evidence" value="ECO:0000315"/>
    <property type="project" value="SGD"/>
</dbReference>
<dbReference type="GO" id="GO:0000278">
    <property type="term" value="P:mitotic cell cycle"/>
    <property type="evidence" value="ECO:0000315"/>
    <property type="project" value="SGD"/>
</dbReference>
<dbReference type="GO" id="GO:0000070">
    <property type="term" value="P:mitotic sister chromatid segregation"/>
    <property type="evidence" value="ECO:0000315"/>
    <property type="project" value="SGD"/>
</dbReference>
<dbReference type="GO" id="GO:0007094">
    <property type="term" value="P:mitotic spindle assembly checkpoint signaling"/>
    <property type="evidence" value="ECO:0000315"/>
    <property type="project" value="SGD"/>
</dbReference>
<dbReference type="GO" id="GO:0034096">
    <property type="term" value="P:positive regulation of maintenance of meiotic sister chromatid cohesion"/>
    <property type="evidence" value="ECO:0000315"/>
    <property type="project" value="SGD"/>
</dbReference>
<dbReference type="GO" id="GO:0031134">
    <property type="term" value="P:sister chromatid biorientation"/>
    <property type="evidence" value="ECO:0000315"/>
    <property type="project" value="SGD"/>
</dbReference>
<dbReference type="InterPro" id="IPR011515">
    <property type="entry name" value="Shugoshin_C"/>
</dbReference>
<dbReference type="InterPro" id="IPR011516">
    <property type="entry name" value="Shugoshin_N"/>
</dbReference>
<dbReference type="Pfam" id="PF07557">
    <property type="entry name" value="Shugoshin_C"/>
    <property type="match status" value="1"/>
</dbReference>
<dbReference type="Pfam" id="PF07558">
    <property type="entry name" value="Shugoshin_N"/>
    <property type="match status" value="1"/>
</dbReference>
<name>SGO1_YEAST</name>
<reference key="1">
    <citation type="journal article" date="1997" name="Yeast">
        <title>The sequence of a 54.7 kb fragment of yeast chromosome XV reveals the presence of two tRNAs and 24 new open reading frames.</title>
        <authorList>
            <person name="Valens M."/>
            <person name="Bohn C."/>
            <person name="Daignan-Fornier B."/>
            <person name="Dang V.-D."/>
            <person name="Bolotin-Fukuhara M."/>
        </authorList>
    </citation>
    <scope>NUCLEOTIDE SEQUENCE [GENOMIC DNA]</scope>
</reference>
<reference key="2">
    <citation type="journal article" date="1997" name="Nature">
        <title>The nucleotide sequence of Saccharomyces cerevisiae chromosome XV.</title>
        <authorList>
            <person name="Dujon B."/>
            <person name="Albermann K."/>
            <person name="Aldea M."/>
            <person name="Alexandraki D."/>
            <person name="Ansorge W."/>
            <person name="Arino J."/>
            <person name="Benes V."/>
            <person name="Bohn C."/>
            <person name="Bolotin-Fukuhara M."/>
            <person name="Bordonne R."/>
            <person name="Boyer J."/>
            <person name="Camasses A."/>
            <person name="Casamayor A."/>
            <person name="Casas C."/>
            <person name="Cheret G."/>
            <person name="Cziepluch C."/>
            <person name="Daignan-Fornier B."/>
            <person name="Dang V.-D."/>
            <person name="de Haan M."/>
            <person name="Delius H."/>
            <person name="Durand P."/>
            <person name="Fairhead C."/>
            <person name="Feldmann H."/>
            <person name="Gaillon L."/>
            <person name="Galisson F."/>
            <person name="Gamo F.-J."/>
            <person name="Gancedo C."/>
            <person name="Goffeau A."/>
            <person name="Goulding S.E."/>
            <person name="Grivell L.A."/>
            <person name="Habbig B."/>
            <person name="Hand N.J."/>
            <person name="Hani J."/>
            <person name="Hattenhorst U."/>
            <person name="Hebling U."/>
            <person name="Hernando Y."/>
            <person name="Herrero E."/>
            <person name="Heumann K."/>
            <person name="Hiesel R."/>
            <person name="Hilger F."/>
            <person name="Hofmann B."/>
            <person name="Hollenberg C.P."/>
            <person name="Hughes B."/>
            <person name="Jauniaux J.-C."/>
            <person name="Kalogeropoulos A."/>
            <person name="Katsoulou C."/>
            <person name="Kordes E."/>
            <person name="Lafuente M.J."/>
            <person name="Landt O."/>
            <person name="Louis E.J."/>
            <person name="Maarse A.C."/>
            <person name="Madania A."/>
            <person name="Mannhaupt G."/>
            <person name="Marck C."/>
            <person name="Martin R.P."/>
            <person name="Mewes H.-W."/>
            <person name="Michaux G."/>
            <person name="Paces V."/>
            <person name="Parle-McDermott A.G."/>
            <person name="Pearson B.M."/>
            <person name="Perrin A."/>
            <person name="Pettersson B."/>
            <person name="Poch O."/>
            <person name="Pohl T.M."/>
            <person name="Poirey R."/>
            <person name="Portetelle D."/>
            <person name="Pujol A."/>
            <person name="Purnelle B."/>
            <person name="Ramezani Rad M."/>
            <person name="Rechmann S."/>
            <person name="Schwager C."/>
            <person name="Schweizer M."/>
            <person name="Sor F."/>
            <person name="Sterky F."/>
            <person name="Tarassov I.A."/>
            <person name="Teodoru C."/>
            <person name="Tettelin H."/>
            <person name="Thierry A."/>
            <person name="Tobiasch E."/>
            <person name="Tzermia M."/>
            <person name="Uhlen M."/>
            <person name="Unseld M."/>
            <person name="Valens M."/>
            <person name="Vandenbol M."/>
            <person name="Vetter I."/>
            <person name="Vlcek C."/>
            <person name="Voet M."/>
            <person name="Volckaert G."/>
            <person name="Voss H."/>
            <person name="Wambutt R."/>
            <person name="Wedler H."/>
            <person name="Wiemann S."/>
            <person name="Winsor B."/>
            <person name="Wolfe K.H."/>
            <person name="Zollner A."/>
            <person name="Zumstein E."/>
            <person name="Kleine K."/>
        </authorList>
    </citation>
    <scope>NUCLEOTIDE SEQUENCE [LARGE SCALE GENOMIC DNA]</scope>
    <source>
        <strain>ATCC 204508 / S288c</strain>
    </source>
</reference>
<reference key="3">
    <citation type="journal article" date="2014" name="G3 (Bethesda)">
        <title>The reference genome sequence of Saccharomyces cerevisiae: Then and now.</title>
        <authorList>
            <person name="Engel S.R."/>
            <person name="Dietrich F.S."/>
            <person name="Fisk D.G."/>
            <person name="Binkley G."/>
            <person name="Balakrishnan R."/>
            <person name="Costanzo M.C."/>
            <person name="Dwight S.S."/>
            <person name="Hitz B.C."/>
            <person name="Karra K."/>
            <person name="Nash R.S."/>
            <person name="Weng S."/>
            <person name="Wong E.D."/>
            <person name="Lloyd P."/>
            <person name="Skrzypek M.S."/>
            <person name="Miyasato S.R."/>
            <person name="Simison M."/>
            <person name="Cherry J.M."/>
        </authorList>
    </citation>
    <scope>GENOME REANNOTATION</scope>
    <source>
        <strain>ATCC 204508 / S288c</strain>
    </source>
</reference>
<reference key="4">
    <citation type="journal article" date="2003" name="Nature">
        <title>Global analysis of protein localization in budding yeast.</title>
        <authorList>
            <person name="Huh W.-K."/>
            <person name="Falvo J.V."/>
            <person name="Gerke L.C."/>
            <person name="Carroll A.S."/>
            <person name="Howson R.W."/>
            <person name="Weissman J.S."/>
            <person name="O'Shea E.K."/>
        </authorList>
    </citation>
    <scope>SUBCELLULAR LOCATION [LARGE SCALE ANALYSIS]</scope>
</reference>
<reference key="5">
    <citation type="journal article" date="2004" name="Curr. Biol.">
        <title>Maintenance of cohesin at centromeres after meiosis I in budding yeast requires a kinetochore-associated protein related to MEI-S332.</title>
        <authorList>
            <person name="Katis V.L."/>
            <person name="Galova M."/>
            <person name="Rabitsch K.P."/>
            <person name="Gregan J."/>
            <person name="Nasmyth K."/>
        </authorList>
    </citation>
    <scope>FUNCTION</scope>
    <scope>SUBCELLULAR LOCATION</scope>
</reference>
<reference key="6">
    <citation type="journal article" date="2004" name="Science">
        <title>A genome-wide screen identifies genes required for centromeric cohesion.</title>
        <authorList>
            <person name="Marston A.L."/>
            <person name="Tham W.-H."/>
            <person name="Shah H."/>
            <person name="Amon A."/>
        </authorList>
    </citation>
    <scope>FUNCTION</scope>
    <scope>SUBCELLULAR LOCATION</scope>
    <scope>DEVELOPMENTAL STAGE</scope>
    <scope>PROBABLE UBIQUITINATION</scope>
</reference>
<reference key="7">
    <citation type="journal article" date="2005" name="Cell">
        <title>Mnd2, an essential antagonist of the anaphase-promoting complex during meiotic prophase.</title>
        <authorList>
            <person name="Penkner A.M."/>
            <person name="Prinz S."/>
            <person name="Ferscha S."/>
            <person name="Klein F."/>
        </authorList>
    </citation>
    <scope>DEGRADATION</scope>
</reference>
<reference key="8">
    <citation type="journal article" date="2005" name="Science">
        <title>The centromeric protein Sgo1 is required to sense lack of tension on mitotic chromosomes.</title>
        <authorList>
            <person name="Indjeian V.B."/>
            <person name="Stern B.M."/>
            <person name="Murray A.W."/>
        </authorList>
    </citation>
    <scope>FUNCTION</scope>
    <scope>PROBABLE UBIQUITINATION</scope>
    <scope>MUTAGENESIS OF THR-379 AND PRO-390</scope>
</reference>
<accession>Q08490</accession>
<accession>D6W2D6</accession>
<accession>O00031</accession>